<reference key="1">
    <citation type="journal article" date="1991" name="J. Virol.">
        <title>Evolutionary analysis of the influenza A virus M gene with comparison of the M1 and M2 proteins.</title>
        <authorList>
            <person name="Ito T."/>
            <person name="Gorman O.T."/>
            <person name="Kawaoka Y."/>
            <person name="Bean W.J."/>
            <person name="Webster R.G."/>
        </authorList>
    </citation>
    <scope>NUCLEOTIDE SEQUENCE [GENOMIC RNA]</scope>
</reference>
<reference key="2">
    <citation type="journal article" date="2006" name="Science">
        <title>Large-scale sequence analysis of avian influenza isolates.</title>
        <authorList>
            <person name="Obenauer J.C."/>
            <person name="Denson J."/>
            <person name="Mehta P.K."/>
            <person name="Su X."/>
            <person name="Mukatira S."/>
            <person name="Finkelstein D.B."/>
            <person name="Xu X."/>
            <person name="Wang J."/>
            <person name="Ma J."/>
            <person name="Fan Y."/>
            <person name="Rakestraw K.M."/>
            <person name="Webster R.G."/>
            <person name="Hoffmann E."/>
            <person name="Krauss S."/>
            <person name="Zheng J."/>
            <person name="Zhang Z."/>
            <person name="Naeve C.W."/>
        </authorList>
    </citation>
    <scope>NUCLEOTIDE SEQUENCE [GENOMIC RNA]</scope>
</reference>
<organism>
    <name type="scientific">Influenza A virus (strain A/Chicken/Victoria/1/1985 H7N7)</name>
    <dbReference type="NCBI Taxonomy" id="402520"/>
    <lineage>
        <taxon>Viruses</taxon>
        <taxon>Riboviria</taxon>
        <taxon>Orthornavirae</taxon>
        <taxon>Negarnaviricota</taxon>
        <taxon>Polyploviricotina</taxon>
        <taxon>Insthoviricetes</taxon>
        <taxon>Articulavirales</taxon>
        <taxon>Orthomyxoviridae</taxon>
        <taxon>Alphainfluenzavirus</taxon>
        <taxon>Alphainfluenzavirus influenzae</taxon>
        <taxon>Influenza A virus</taxon>
    </lineage>
</organism>
<dbReference type="EMBL" id="M63523">
    <property type="protein sequence ID" value="AAA43282.1"/>
    <property type="molecule type" value="Genomic_RNA"/>
</dbReference>
<dbReference type="EMBL" id="CY015020">
    <property type="protein sequence ID" value="ABI85019.1"/>
    <property type="molecule type" value="Genomic_RNA"/>
</dbReference>
<dbReference type="SMR" id="Q67163"/>
<dbReference type="GO" id="GO:0042025">
    <property type="term" value="C:host cell nucleus"/>
    <property type="evidence" value="ECO:0007669"/>
    <property type="project" value="UniProtKB-SubCell"/>
</dbReference>
<dbReference type="GO" id="GO:0016020">
    <property type="term" value="C:membrane"/>
    <property type="evidence" value="ECO:0007669"/>
    <property type="project" value="UniProtKB-KW"/>
</dbReference>
<dbReference type="GO" id="GO:0055036">
    <property type="term" value="C:virion membrane"/>
    <property type="evidence" value="ECO:0007669"/>
    <property type="project" value="UniProtKB-SubCell"/>
</dbReference>
<dbReference type="GO" id="GO:0003723">
    <property type="term" value="F:RNA binding"/>
    <property type="evidence" value="ECO:0007669"/>
    <property type="project" value="UniProtKB-UniRule"/>
</dbReference>
<dbReference type="GO" id="GO:0039660">
    <property type="term" value="F:structural constituent of virion"/>
    <property type="evidence" value="ECO:0007669"/>
    <property type="project" value="UniProtKB-UniRule"/>
</dbReference>
<dbReference type="GO" id="GO:0046761">
    <property type="term" value="P:viral budding from plasma membrane"/>
    <property type="evidence" value="ECO:0007669"/>
    <property type="project" value="UniProtKB-UniRule"/>
</dbReference>
<dbReference type="FunFam" id="1.10.10.180:FF:000001">
    <property type="entry name" value="Matrix protein 1"/>
    <property type="match status" value="1"/>
</dbReference>
<dbReference type="FunFam" id="1.20.91.10:FF:000001">
    <property type="entry name" value="Matrix protein 1"/>
    <property type="match status" value="1"/>
</dbReference>
<dbReference type="Gene3D" id="1.10.10.180">
    <property type="match status" value="1"/>
</dbReference>
<dbReference type="Gene3D" id="1.20.91.10">
    <property type="match status" value="1"/>
</dbReference>
<dbReference type="HAMAP" id="MF_04068">
    <property type="entry name" value="INFV_M1"/>
    <property type="match status" value="1"/>
</dbReference>
<dbReference type="InterPro" id="IPR036039">
    <property type="entry name" value="Flu_matrix_M1"/>
</dbReference>
<dbReference type="InterPro" id="IPR013188">
    <property type="entry name" value="Flu_matrix_M1_C"/>
</dbReference>
<dbReference type="InterPro" id="IPR001561">
    <property type="entry name" value="Flu_matrix_M1_N"/>
</dbReference>
<dbReference type="InterPro" id="IPR015423">
    <property type="entry name" value="Flu_matrix_M1_N_sub1"/>
</dbReference>
<dbReference type="InterPro" id="IPR015799">
    <property type="entry name" value="Flu_matrix_M1_N_sub2"/>
</dbReference>
<dbReference type="InterPro" id="IPR037533">
    <property type="entry name" value="INFV_M1"/>
</dbReference>
<dbReference type="Pfam" id="PF00598">
    <property type="entry name" value="Flu_M1"/>
    <property type="match status" value="1"/>
</dbReference>
<dbReference type="Pfam" id="PF08289">
    <property type="entry name" value="Flu_M1_C"/>
    <property type="match status" value="1"/>
</dbReference>
<dbReference type="SMART" id="SM00759">
    <property type="entry name" value="Flu_M1_C"/>
    <property type="match status" value="1"/>
</dbReference>
<dbReference type="SUPFAM" id="SSF48145">
    <property type="entry name" value="Influenza virus matrix protein M1"/>
    <property type="match status" value="1"/>
</dbReference>
<sequence>MSLLTEVETYVLSIVPSGPLKAEIAQRLEDVFAGKNTDLEALMEWLKTRPILSPLTKGILGFVFTLTVPSERGLQRRRFVQNALNGNGDPNNMDRAVKLYRKLKREITFHGAKEVALSYSTGALASCMGLIYNRMGTVTTEVAFGLVCATCEQIADSQHRSHRQMVTTTNPLIRHENRMVLASTTAKAMEQMAGSSEQAAEAMEVASQARHMVQAMRTIGTHPSSSAGLKDDLLENLQAYQKRMGVQMQRFK</sequence>
<accession>Q67163</accession>
<accession>Q0A2R2</accession>
<proteinExistence type="inferred from homology"/>
<gene>
    <name evidence="1" type="primary">M</name>
</gene>
<protein>
    <recommendedName>
        <fullName evidence="1">Matrix protein 1</fullName>
        <shortName evidence="1">M1</shortName>
    </recommendedName>
</protein>
<comment type="function">
    <text evidence="1">Plays critical roles in virus replication, from virus entry and uncoating to assembly and budding of the virus particle. M1 binding to ribonucleocapsids (RNPs) in nucleus seems to inhibit viral transcription. Interaction of viral NEP with M1-RNP is thought to promote nuclear export of the complex, which is targeted to the virion assembly site at the apical plasma membrane in polarized epithelial cells. Interactions with NA and HA may bring M1, a non-raft-associated protein, into lipid rafts. Forms a continuous shell on the inner side of the lipid bilayer in virion, where it binds the RNP. During virus entry into cell, the M2 ion channel acidifies the internal virion core, inducing M1 dissociation from the RNP. M1-free RNPs are transported to the nucleus, where viral transcription and replication can take place.</text>
</comment>
<comment type="function">
    <text evidence="1">Determines the virion's shape: spherical or filamentous. Clinical isolates of influenza are characterized by the presence of significant proportion of filamentous virions, whereas after multiple passage on eggs or cell culture, virions have only spherical morphology. Filamentous virions are thought to be important to infect neighboring cells, and spherical virions more suited to spread through aerosol between hosts organisms.</text>
</comment>
<comment type="subunit">
    <text evidence="1">Homodimer and homomultimer. Interacts with NEP. Binds ribonucleocapsid by both interacting with genomic RNA and NP protein. May interact with HA and NA. Cannot bind NP without genomic RNA.</text>
</comment>
<comment type="subcellular location">
    <subcellularLocation>
        <location evidence="1">Virion membrane</location>
        <topology evidence="1">Peripheral membrane protein</topology>
        <orientation evidence="1">Cytoplasmic side</orientation>
    </subcellularLocation>
    <subcellularLocation>
        <location evidence="1">Host nucleus</location>
    </subcellularLocation>
</comment>
<comment type="alternative products">
    <event type="alternative splicing"/>
    <isoform>
        <id>Q67163-1</id>
        <name>M1</name>
        <sequence type="displayed"/>
    </isoform>
    <isoform>
        <id>Q67162-1</id>
        <name>M2</name>
        <sequence type="external"/>
    </isoform>
    <text>Only the first 9 residues are shared by the 2 isoforms.</text>
</comment>
<comment type="miscellaneous">
    <text evidence="1">Most abundant protein in virion. When expressed alone can form virus-like particles in transfected cells.</text>
</comment>
<comment type="similarity">
    <text evidence="1">Belongs to the influenza viruses Matrix protein M1 family.</text>
</comment>
<name>M1_I85A3</name>
<organismHost>
    <name type="scientific">Aves</name>
    <dbReference type="NCBI Taxonomy" id="8782"/>
</organismHost>
<organismHost>
    <name type="scientific">Equus caballus</name>
    <name type="common">Horse</name>
    <dbReference type="NCBI Taxonomy" id="9796"/>
</organismHost>
<organismHost>
    <name type="scientific">Homo sapiens</name>
    <name type="common">Human</name>
    <dbReference type="NCBI Taxonomy" id="9606"/>
</organismHost>
<organismHost>
    <name type="scientific">Phocidae</name>
    <name type="common">true seals</name>
    <dbReference type="NCBI Taxonomy" id="9709"/>
</organismHost>
<keyword id="KW-0025">Alternative splicing</keyword>
<keyword id="KW-1048">Host nucleus</keyword>
<keyword id="KW-0472">Membrane</keyword>
<keyword id="KW-0694">RNA-binding</keyword>
<keyword id="KW-0468">Viral matrix protein</keyword>
<keyword id="KW-0946">Virion</keyword>
<evidence type="ECO:0000255" key="1">
    <source>
        <dbReference type="HAMAP-Rule" id="MF_04068"/>
    </source>
</evidence>
<feature type="chain" id="PRO_0000326323" description="Matrix protein 1">
    <location>
        <begin position="1"/>
        <end position="252"/>
    </location>
</feature>
<feature type="region of interest" description="Membrane-binding" evidence="1">
    <location>
        <begin position="1"/>
        <end position="164"/>
    </location>
</feature>
<feature type="region of interest" description="RNP-binding" evidence="1">
    <location>
        <begin position="165"/>
        <end position="252"/>
    </location>
</feature>
<feature type="short sequence motif" description="Nuclear localization signal" evidence="1">
    <location>
        <begin position="101"/>
        <end position="105"/>
    </location>
</feature>
<feature type="sequence conflict" description="In Ref. 2; ABI85019." ref="2">
    <original>H</original>
    <variation>Q</variation>
    <location>
        <position position="211"/>
    </location>
</feature>